<sequence>MNELKNDRYLRALLRQPVDMTPVWMMRQAGRYLPEYKATRAIAGDFMSLCKNAELACEVTMQPLRRYPLDAAILFSDILTIPDAMGLGLYFETGEGPRFQSPITCRADVEKLPIPDPEQELGYVMNAVRTIRRELAGSVPLIGFSGSPWTLATYMVEGGSSKAFTKLKKMMYAEPQTLHLLLDKLADSVILYLNAQIKAGAQSVMIFDTWGGVLTGRDYHEFSLNYMHKIVDGLIRENEGRRVPVTLFTKGGGQWLEAMAATGCDALGLDWTTDIADARRRVGDKVALQGNMDPSVLYAPPARIEQEVSTILASFGQGEGHVFNLGHGIHQDVPPAHAGAFVNAVHALSRPYHQK</sequence>
<name>DCUP_YERP3</name>
<comment type="function">
    <text evidence="1">Catalyzes the decarboxylation of four acetate groups of uroporphyrinogen-III to yield coproporphyrinogen-III.</text>
</comment>
<comment type="catalytic activity">
    <reaction evidence="1">
        <text>uroporphyrinogen III + 4 H(+) = coproporphyrinogen III + 4 CO2</text>
        <dbReference type="Rhea" id="RHEA:19865"/>
        <dbReference type="ChEBI" id="CHEBI:15378"/>
        <dbReference type="ChEBI" id="CHEBI:16526"/>
        <dbReference type="ChEBI" id="CHEBI:57308"/>
        <dbReference type="ChEBI" id="CHEBI:57309"/>
        <dbReference type="EC" id="4.1.1.37"/>
    </reaction>
</comment>
<comment type="pathway">
    <text evidence="1">Porphyrin-containing compound metabolism; protoporphyrin-IX biosynthesis; coproporphyrinogen-III from 5-aminolevulinate: step 4/4.</text>
</comment>
<comment type="subunit">
    <text evidence="1">Homodimer.</text>
</comment>
<comment type="subcellular location">
    <subcellularLocation>
        <location evidence="1">Cytoplasm</location>
    </subcellularLocation>
</comment>
<comment type="similarity">
    <text evidence="1">Belongs to the uroporphyrinogen decarboxylase family.</text>
</comment>
<organism>
    <name type="scientific">Yersinia pseudotuberculosis serotype O:1b (strain IP 31758)</name>
    <dbReference type="NCBI Taxonomy" id="349747"/>
    <lineage>
        <taxon>Bacteria</taxon>
        <taxon>Pseudomonadati</taxon>
        <taxon>Pseudomonadota</taxon>
        <taxon>Gammaproteobacteria</taxon>
        <taxon>Enterobacterales</taxon>
        <taxon>Yersiniaceae</taxon>
        <taxon>Yersinia</taxon>
    </lineage>
</organism>
<dbReference type="EC" id="4.1.1.37" evidence="1"/>
<dbReference type="EMBL" id="CP000720">
    <property type="protein sequence ID" value="ABS48981.1"/>
    <property type="molecule type" value="Genomic_DNA"/>
</dbReference>
<dbReference type="RefSeq" id="WP_011191555.1">
    <property type="nucleotide sequence ID" value="NC_009708.1"/>
</dbReference>
<dbReference type="SMR" id="A7FNH2"/>
<dbReference type="GeneID" id="49787714"/>
<dbReference type="KEGG" id="ypi:YpsIP31758_3849"/>
<dbReference type="HOGENOM" id="CLU_040933_0_0_6"/>
<dbReference type="UniPathway" id="UPA00251">
    <property type="reaction ID" value="UER00321"/>
</dbReference>
<dbReference type="Proteomes" id="UP000002412">
    <property type="component" value="Chromosome"/>
</dbReference>
<dbReference type="GO" id="GO:0005829">
    <property type="term" value="C:cytosol"/>
    <property type="evidence" value="ECO:0007669"/>
    <property type="project" value="TreeGrafter"/>
</dbReference>
<dbReference type="GO" id="GO:0004853">
    <property type="term" value="F:uroporphyrinogen decarboxylase activity"/>
    <property type="evidence" value="ECO:0007669"/>
    <property type="project" value="UniProtKB-UniRule"/>
</dbReference>
<dbReference type="GO" id="GO:0019353">
    <property type="term" value="P:protoporphyrinogen IX biosynthetic process from glutamate"/>
    <property type="evidence" value="ECO:0007669"/>
    <property type="project" value="TreeGrafter"/>
</dbReference>
<dbReference type="CDD" id="cd00717">
    <property type="entry name" value="URO-D"/>
    <property type="match status" value="1"/>
</dbReference>
<dbReference type="FunFam" id="3.20.20.210:FF:000001">
    <property type="entry name" value="Uroporphyrinogen decarboxylase"/>
    <property type="match status" value="1"/>
</dbReference>
<dbReference type="Gene3D" id="3.20.20.210">
    <property type="match status" value="1"/>
</dbReference>
<dbReference type="HAMAP" id="MF_00218">
    <property type="entry name" value="URO_D"/>
    <property type="match status" value="1"/>
</dbReference>
<dbReference type="InterPro" id="IPR038071">
    <property type="entry name" value="UROD/MetE-like_sf"/>
</dbReference>
<dbReference type="InterPro" id="IPR006361">
    <property type="entry name" value="Uroporphyrinogen_deCO2ase_HemE"/>
</dbReference>
<dbReference type="InterPro" id="IPR000257">
    <property type="entry name" value="Uroporphyrinogen_deCOase"/>
</dbReference>
<dbReference type="NCBIfam" id="TIGR01464">
    <property type="entry name" value="hemE"/>
    <property type="match status" value="1"/>
</dbReference>
<dbReference type="PANTHER" id="PTHR21091">
    <property type="entry name" value="METHYLTETRAHYDROFOLATE:HOMOCYSTEINE METHYLTRANSFERASE RELATED"/>
    <property type="match status" value="1"/>
</dbReference>
<dbReference type="PANTHER" id="PTHR21091:SF169">
    <property type="entry name" value="UROPORPHYRINOGEN DECARBOXYLASE"/>
    <property type="match status" value="1"/>
</dbReference>
<dbReference type="Pfam" id="PF01208">
    <property type="entry name" value="URO-D"/>
    <property type="match status" value="1"/>
</dbReference>
<dbReference type="SUPFAM" id="SSF51726">
    <property type="entry name" value="UROD/MetE-like"/>
    <property type="match status" value="1"/>
</dbReference>
<dbReference type="PROSITE" id="PS00906">
    <property type="entry name" value="UROD_1"/>
    <property type="match status" value="1"/>
</dbReference>
<dbReference type="PROSITE" id="PS00907">
    <property type="entry name" value="UROD_2"/>
    <property type="match status" value="1"/>
</dbReference>
<proteinExistence type="inferred from homology"/>
<evidence type="ECO:0000255" key="1">
    <source>
        <dbReference type="HAMAP-Rule" id="MF_00218"/>
    </source>
</evidence>
<reference key="1">
    <citation type="journal article" date="2007" name="PLoS Genet.">
        <title>The complete genome sequence of Yersinia pseudotuberculosis IP31758, the causative agent of Far East scarlet-like fever.</title>
        <authorList>
            <person name="Eppinger M."/>
            <person name="Rosovitz M.J."/>
            <person name="Fricke W.F."/>
            <person name="Rasko D.A."/>
            <person name="Kokorina G."/>
            <person name="Fayolle C."/>
            <person name="Lindler L.E."/>
            <person name="Carniel E."/>
            <person name="Ravel J."/>
        </authorList>
    </citation>
    <scope>NUCLEOTIDE SEQUENCE [LARGE SCALE GENOMIC DNA]</scope>
    <source>
        <strain>IP 31758</strain>
    </source>
</reference>
<accession>A7FNH2</accession>
<gene>
    <name evidence="1" type="primary">hemE</name>
    <name type="ordered locus">YpsIP31758_3849</name>
</gene>
<keyword id="KW-0963">Cytoplasm</keyword>
<keyword id="KW-0210">Decarboxylase</keyword>
<keyword id="KW-0456">Lyase</keyword>
<keyword id="KW-0627">Porphyrin biosynthesis</keyword>
<feature type="chain" id="PRO_1000058647" description="Uroporphyrinogen decarboxylase">
    <location>
        <begin position="1"/>
        <end position="355"/>
    </location>
</feature>
<feature type="binding site" evidence="1">
    <location>
        <begin position="27"/>
        <end position="31"/>
    </location>
    <ligand>
        <name>substrate</name>
    </ligand>
</feature>
<feature type="binding site" evidence="1">
    <location>
        <position position="77"/>
    </location>
    <ligand>
        <name>substrate</name>
    </ligand>
</feature>
<feature type="binding site" evidence="1">
    <location>
        <position position="154"/>
    </location>
    <ligand>
        <name>substrate</name>
    </ligand>
</feature>
<feature type="binding site" evidence="1">
    <location>
        <position position="209"/>
    </location>
    <ligand>
        <name>substrate</name>
    </ligand>
</feature>
<feature type="binding site" evidence="1">
    <location>
        <position position="327"/>
    </location>
    <ligand>
        <name>substrate</name>
    </ligand>
</feature>
<feature type="site" description="Transition state stabilizer" evidence="1">
    <location>
        <position position="77"/>
    </location>
</feature>
<protein>
    <recommendedName>
        <fullName evidence="1">Uroporphyrinogen decarboxylase</fullName>
        <shortName evidence="1">UPD</shortName>
        <shortName evidence="1">URO-D</shortName>
        <ecNumber evidence="1">4.1.1.37</ecNumber>
    </recommendedName>
</protein>